<comment type="function">
    <text evidence="1">An accessory protein needed during the final step in the assembly of 30S ribosomal subunit, possibly for assembly of the head region. Essential for efficient processing of 16S rRNA. May be needed both before and after RbfA during the maturation of 16S rRNA. It has affinity for free ribosomal 30S subunits but not for 70S ribosomes.</text>
</comment>
<comment type="subunit">
    <text evidence="1">Binds ribosomal protein uS19.</text>
</comment>
<comment type="subcellular location">
    <subcellularLocation>
        <location evidence="1">Cytoplasm</location>
    </subcellularLocation>
</comment>
<comment type="domain">
    <text evidence="1">The PRC barrel domain binds ribosomal protein uS19.</text>
</comment>
<comment type="similarity">
    <text evidence="1">Belongs to the RimM family.</text>
</comment>
<dbReference type="EMBL" id="AE005674">
    <property type="protein sequence ID" value="AAN44163.2"/>
    <property type="molecule type" value="Genomic_DNA"/>
</dbReference>
<dbReference type="EMBL" id="AE014073">
    <property type="protein sequence ID" value="AAP17988.1"/>
    <property type="molecule type" value="Genomic_DNA"/>
</dbReference>
<dbReference type="RefSeq" id="NP_708456.2">
    <property type="nucleotide sequence ID" value="NC_004337.2"/>
</dbReference>
<dbReference type="RefSeq" id="WP_000043335.1">
    <property type="nucleotide sequence ID" value="NZ_WPGW01000074.1"/>
</dbReference>
<dbReference type="SMR" id="P0A7X9"/>
<dbReference type="STRING" id="198214.SF2668"/>
<dbReference type="PaxDb" id="198214-SF2668"/>
<dbReference type="GeneID" id="1026714"/>
<dbReference type="GeneID" id="93774458"/>
<dbReference type="KEGG" id="sfl:SF2668"/>
<dbReference type="KEGG" id="sfx:S2845"/>
<dbReference type="PATRIC" id="fig|198214.7.peg.3177"/>
<dbReference type="HOGENOM" id="CLU_077636_1_0_6"/>
<dbReference type="Proteomes" id="UP000001006">
    <property type="component" value="Chromosome"/>
</dbReference>
<dbReference type="Proteomes" id="UP000002673">
    <property type="component" value="Chromosome"/>
</dbReference>
<dbReference type="GO" id="GO:0005737">
    <property type="term" value="C:cytoplasm"/>
    <property type="evidence" value="ECO:0007669"/>
    <property type="project" value="UniProtKB-SubCell"/>
</dbReference>
<dbReference type="GO" id="GO:0005840">
    <property type="term" value="C:ribosome"/>
    <property type="evidence" value="ECO:0007669"/>
    <property type="project" value="InterPro"/>
</dbReference>
<dbReference type="GO" id="GO:0043022">
    <property type="term" value="F:ribosome binding"/>
    <property type="evidence" value="ECO:0007669"/>
    <property type="project" value="InterPro"/>
</dbReference>
<dbReference type="GO" id="GO:0042274">
    <property type="term" value="P:ribosomal small subunit biogenesis"/>
    <property type="evidence" value="ECO:0007669"/>
    <property type="project" value="UniProtKB-UniRule"/>
</dbReference>
<dbReference type="GO" id="GO:0006364">
    <property type="term" value="P:rRNA processing"/>
    <property type="evidence" value="ECO:0007669"/>
    <property type="project" value="UniProtKB-UniRule"/>
</dbReference>
<dbReference type="FunFam" id="2.30.30.240:FF:000001">
    <property type="entry name" value="Ribosome maturation factor RimM"/>
    <property type="match status" value="1"/>
</dbReference>
<dbReference type="FunFam" id="2.40.30.60:FF:000001">
    <property type="entry name" value="Ribosome maturation factor RimM"/>
    <property type="match status" value="1"/>
</dbReference>
<dbReference type="Gene3D" id="2.30.30.240">
    <property type="entry name" value="PRC-barrel domain"/>
    <property type="match status" value="1"/>
</dbReference>
<dbReference type="Gene3D" id="2.40.30.60">
    <property type="entry name" value="RimM"/>
    <property type="match status" value="1"/>
</dbReference>
<dbReference type="HAMAP" id="MF_00014">
    <property type="entry name" value="Ribosome_mat_RimM"/>
    <property type="match status" value="1"/>
</dbReference>
<dbReference type="InterPro" id="IPR011033">
    <property type="entry name" value="PRC_barrel-like_sf"/>
</dbReference>
<dbReference type="InterPro" id="IPR056792">
    <property type="entry name" value="PRC_RimM"/>
</dbReference>
<dbReference type="InterPro" id="IPR011961">
    <property type="entry name" value="RimM"/>
</dbReference>
<dbReference type="InterPro" id="IPR002676">
    <property type="entry name" value="RimM_N"/>
</dbReference>
<dbReference type="InterPro" id="IPR036976">
    <property type="entry name" value="RimM_N_sf"/>
</dbReference>
<dbReference type="InterPro" id="IPR009000">
    <property type="entry name" value="Transl_B-barrel_sf"/>
</dbReference>
<dbReference type="NCBIfam" id="TIGR02273">
    <property type="entry name" value="16S_RimM"/>
    <property type="match status" value="1"/>
</dbReference>
<dbReference type="PANTHER" id="PTHR33692">
    <property type="entry name" value="RIBOSOME MATURATION FACTOR RIMM"/>
    <property type="match status" value="1"/>
</dbReference>
<dbReference type="PANTHER" id="PTHR33692:SF1">
    <property type="entry name" value="RIBOSOME MATURATION FACTOR RIMM"/>
    <property type="match status" value="1"/>
</dbReference>
<dbReference type="Pfam" id="PF24986">
    <property type="entry name" value="PRC_RimM"/>
    <property type="match status" value="1"/>
</dbReference>
<dbReference type="Pfam" id="PF01782">
    <property type="entry name" value="RimM"/>
    <property type="match status" value="1"/>
</dbReference>
<dbReference type="SUPFAM" id="SSF50346">
    <property type="entry name" value="PRC-barrel domain"/>
    <property type="match status" value="1"/>
</dbReference>
<dbReference type="SUPFAM" id="SSF50447">
    <property type="entry name" value="Translation proteins"/>
    <property type="match status" value="1"/>
</dbReference>
<name>RIMM_SHIFL</name>
<sequence length="182" mass="20605">MSKQLTAQAPVDPIVLGKMGSSYGIRGWLRVFSSTEDAESIFDYQPWFIQKAGQWQQVQLESWKHHNQDMIIKLKGVDDRDAANLLTNCEIVVDSSQLPQLEEGDYYWKDLMGCQVVTTEGYDLGKVVDMMETGSNDVLVIKANLKDAFGIKERLVPFLDGQVIKKVDLTTRSIEVDWDPGF</sequence>
<evidence type="ECO:0000255" key="1">
    <source>
        <dbReference type="HAMAP-Rule" id="MF_00014"/>
    </source>
</evidence>
<keyword id="KW-0143">Chaperone</keyword>
<keyword id="KW-0963">Cytoplasm</keyword>
<keyword id="KW-1185">Reference proteome</keyword>
<keyword id="KW-0690">Ribosome biogenesis</keyword>
<keyword id="KW-0698">rRNA processing</keyword>
<reference key="1">
    <citation type="journal article" date="2002" name="Nucleic Acids Res.">
        <title>Genome sequence of Shigella flexneri 2a: insights into pathogenicity through comparison with genomes of Escherichia coli K12 and O157.</title>
        <authorList>
            <person name="Jin Q."/>
            <person name="Yuan Z."/>
            <person name="Xu J."/>
            <person name="Wang Y."/>
            <person name="Shen Y."/>
            <person name="Lu W."/>
            <person name="Wang J."/>
            <person name="Liu H."/>
            <person name="Yang J."/>
            <person name="Yang F."/>
            <person name="Zhang X."/>
            <person name="Zhang J."/>
            <person name="Yang G."/>
            <person name="Wu H."/>
            <person name="Qu D."/>
            <person name="Dong J."/>
            <person name="Sun L."/>
            <person name="Xue Y."/>
            <person name="Zhao A."/>
            <person name="Gao Y."/>
            <person name="Zhu J."/>
            <person name="Kan B."/>
            <person name="Ding K."/>
            <person name="Chen S."/>
            <person name="Cheng H."/>
            <person name="Yao Z."/>
            <person name="He B."/>
            <person name="Chen R."/>
            <person name="Ma D."/>
            <person name="Qiang B."/>
            <person name="Wen Y."/>
            <person name="Hou Y."/>
            <person name="Yu J."/>
        </authorList>
    </citation>
    <scope>NUCLEOTIDE SEQUENCE [LARGE SCALE GENOMIC DNA]</scope>
    <source>
        <strain>301 / Serotype 2a</strain>
    </source>
</reference>
<reference key="2">
    <citation type="journal article" date="2003" name="Infect. Immun.">
        <title>Complete genome sequence and comparative genomics of Shigella flexneri serotype 2a strain 2457T.</title>
        <authorList>
            <person name="Wei J."/>
            <person name="Goldberg M.B."/>
            <person name="Burland V."/>
            <person name="Venkatesan M.M."/>
            <person name="Deng W."/>
            <person name="Fournier G."/>
            <person name="Mayhew G.F."/>
            <person name="Plunkett G. III"/>
            <person name="Rose D.J."/>
            <person name="Darling A."/>
            <person name="Mau B."/>
            <person name="Perna N.T."/>
            <person name="Payne S.M."/>
            <person name="Runyen-Janecky L.J."/>
            <person name="Zhou S."/>
            <person name="Schwartz D.C."/>
            <person name="Blattner F.R."/>
        </authorList>
    </citation>
    <scope>NUCLEOTIDE SEQUENCE [LARGE SCALE GENOMIC DNA]</scope>
    <source>
        <strain>ATCC 700930 / 2457T / Serotype 2a</strain>
    </source>
</reference>
<accession>P0A7X9</accession>
<accession>P21504</accession>
<accession>Q8X9D2</accession>
<organism>
    <name type="scientific">Shigella flexneri</name>
    <dbReference type="NCBI Taxonomy" id="623"/>
    <lineage>
        <taxon>Bacteria</taxon>
        <taxon>Pseudomonadati</taxon>
        <taxon>Pseudomonadota</taxon>
        <taxon>Gammaproteobacteria</taxon>
        <taxon>Enterobacterales</taxon>
        <taxon>Enterobacteriaceae</taxon>
        <taxon>Shigella</taxon>
    </lineage>
</organism>
<feature type="chain" id="PRO_0000163349" description="Ribosome maturation factor RimM">
    <location>
        <begin position="1"/>
        <end position="182"/>
    </location>
</feature>
<feature type="domain" description="PRC barrel" evidence="1">
    <location>
        <begin position="103"/>
        <end position="182"/>
    </location>
</feature>
<gene>
    <name evidence="1" type="primary">rimM</name>
    <name type="ordered locus">SF2668</name>
    <name type="ordered locus">S2845</name>
</gene>
<proteinExistence type="inferred from homology"/>
<protein>
    <recommendedName>
        <fullName evidence="1">Ribosome maturation factor RimM</fullName>
    </recommendedName>
</protein>